<sequence>MFFTKPRLHRIITHNLHHLLSPHLLLSEISGSLGDLGTLLPLLLALSLQGSIDLPSTLLFSGLFNILTGLVFGVPLPVQPMKAIAAASLQENADLETTVAAGAWVGFAVLLLGGTGGLKRVMRWVPGAVVRGVQVGAGMSLVVAAGGGMVRPLGWLWTPEENENGHGGLGEWLDSRALAVLAFGGLVVGLGQQQQQQQQSGEKPQERRKKRSKMPVQVPYALVLFLVGIMFAVVRVSLSKDSPQSPPPPPHDQPTNSAPPWTWIWNPLNHIHPKVFRSLLNPQALSMAIAQLPLTTLNSIIAASALASDLFPPDSYPQLYADDESSDSPLSPSPSASSSSLSSAPPQTPSAETPKPLSSPTSAEEGPVPLTPLSLSISAMNLLSAPFGCMPLCHGSGGLAAQHRFGARSGTSIILLGLTKFLLGLFFPGPGLLGLLGKFPKAFLGVMVLGAGVELARVGVRNVEGEEQDRMVMLMTAGTILAFKNDGVGFLAGMGCYGGFRVAAWLGGGTEKGRGGEQGLLGEEEEEEEQGRVDEESPLLR</sequence>
<keyword id="KW-0472">Membrane</keyword>
<keyword id="KW-0500">Molybdenum</keyword>
<keyword id="KW-1185">Reference proteome</keyword>
<keyword id="KW-0812">Transmembrane</keyword>
<keyword id="KW-1133">Transmembrane helix</keyword>
<keyword id="KW-0813">Transport</keyword>
<keyword id="KW-0926">Vacuole</keyword>
<protein>
    <recommendedName>
        <fullName evidence="4">Molybdate transporter 1</fullName>
    </recommendedName>
    <alternativeName>
        <fullName evidence="4">NcMOT-1</fullName>
    </alternativeName>
    <alternativeName>
        <fullName evidence="4">Vacuolar molybdate exporter 1</fullName>
    </alternativeName>
</protein>
<reference evidence="7" key="1">
    <citation type="journal article" date="2003" name="Nature">
        <title>The genome sequence of the filamentous fungus Neurospora crassa.</title>
        <authorList>
            <person name="Galagan J.E."/>
            <person name="Calvo S.E."/>
            <person name="Borkovich K.A."/>
            <person name="Selker E.U."/>
            <person name="Read N.D."/>
            <person name="Jaffe D.B."/>
            <person name="FitzHugh W."/>
            <person name="Ma L.-J."/>
            <person name="Smirnov S."/>
            <person name="Purcell S."/>
            <person name="Rehman B."/>
            <person name="Elkins T."/>
            <person name="Engels R."/>
            <person name="Wang S."/>
            <person name="Nielsen C.B."/>
            <person name="Butler J."/>
            <person name="Endrizzi M."/>
            <person name="Qui D."/>
            <person name="Ianakiev P."/>
            <person name="Bell-Pedersen D."/>
            <person name="Nelson M.A."/>
            <person name="Werner-Washburne M."/>
            <person name="Selitrennikoff C.P."/>
            <person name="Kinsey J.A."/>
            <person name="Braun E.L."/>
            <person name="Zelter A."/>
            <person name="Schulte U."/>
            <person name="Kothe G.O."/>
            <person name="Jedd G."/>
            <person name="Mewes H.-W."/>
            <person name="Staben C."/>
            <person name="Marcotte E."/>
            <person name="Greenberg D."/>
            <person name="Roy A."/>
            <person name="Foley K."/>
            <person name="Naylor J."/>
            <person name="Stange-Thomann N."/>
            <person name="Barrett R."/>
            <person name="Gnerre S."/>
            <person name="Kamal M."/>
            <person name="Kamvysselis M."/>
            <person name="Mauceli E.W."/>
            <person name="Bielke C."/>
            <person name="Rudd S."/>
            <person name="Frishman D."/>
            <person name="Krystofova S."/>
            <person name="Rasmussen C."/>
            <person name="Metzenberg R.L."/>
            <person name="Perkins D.D."/>
            <person name="Kroken S."/>
            <person name="Cogoni C."/>
            <person name="Macino G."/>
            <person name="Catcheside D.E.A."/>
            <person name="Li W."/>
            <person name="Pratt R.J."/>
            <person name="Osmani S.A."/>
            <person name="DeSouza C.P.C."/>
            <person name="Glass N.L."/>
            <person name="Orbach M.J."/>
            <person name="Berglund J.A."/>
            <person name="Voelker R."/>
            <person name="Yarden O."/>
            <person name="Plamann M."/>
            <person name="Seiler S."/>
            <person name="Dunlap J.C."/>
            <person name="Radford A."/>
            <person name="Aramayo R."/>
            <person name="Natvig D.O."/>
            <person name="Alex L.A."/>
            <person name="Mannhaupt G."/>
            <person name="Ebbole D.J."/>
            <person name="Freitag M."/>
            <person name="Paulsen I."/>
            <person name="Sachs M.S."/>
            <person name="Lander E.S."/>
            <person name="Nusbaum C."/>
            <person name="Birren B.W."/>
        </authorList>
    </citation>
    <scope>NUCLEOTIDE SEQUENCE [LARGE SCALE GENOMIC DNA]</scope>
    <source>
        <strain evidence="7">ATCC 24698 / 74-OR23-1A / CBS 708.71 / DSM 1257 / FGSC 987</strain>
    </source>
</reference>
<reference evidence="5" key="2">
    <citation type="journal article" date="2022" name="Fungal Genet. Biol.">
        <title>The Neurospora crassa molybdate transporter: Characterizing a novel transporter homologous to the plant MOT1 family.</title>
        <authorList>
            <person name="Oliphant K.D."/>
            <person name="Rabenow M."/>
            <person name="Hohtanz L."/>
            <person name="Mendel R.R."/>
        </authorList>
    </citation>
    <scope>FUNCTION</scope>
    <scope>SUBCELLULAR LOCATION</scope>
    <scope>DISRUPTION PHENOTYPE</scope>
</reference>
<proteinExistence type="inferred from homology"/>
<accession>Q1K6N8</accession>
<feature type="chain" id="PRO_0000457662" description="Molybdate transporter 1">
    <location>
        <begin position="1"/>
        <end position="541"/>
    </location>
</feature>
<feature type="transmembrane region" description="Helical" evidence="1">
    <location>
        <begin position="24"/>
        <end position="44"/>
    </location>
</feature>
<feature type="transmembrane region" description="Helical" evidence="1">
    <location>
        <begin position="58"/>
        <end position="78"/>
    </location>
</feature>
<feature type="transmembrane region" description="Helical" evidence="1">
    <location>
        <begin position="98"/>
        <end position="118"/>
    </location>
</feature>
<feature type="transmembrane region" description="Helical" evidence="1">
    <location>
        <begin position="137"/>
        <end position="157"/>
    </location>
</feature>
<feature type="transmembrane region" description="Helical" evidence="1">
    <location>
        <begin position="168"/>
        <end position="188"/>
    </location>
</feature>
<feature type="transmembrane region" description="Helical" evidence="1">
    <location>
        <begin position="214"/>
        <end position="234"/>
    </location>
</feature>
<feature type="transmembrane region" description="Helical" evidence="1">
    <location>
        <begin position="287"/>
        <end position="307"/>
    </location>
</feature>
<feature type="transmembrane region" description="Helical" evidence="1">
    <location>
        <begin position="413"/>
        <end position="433"/>
    </location>
</feature>
<feature type="transmembrane region" description="Helical" evidence="1">
    <location>
        <begin position="435"/>
        <end position="455"/>
    </location>
</feature>
<feature type="region of interest" description="Disordered" evidence="2">
    <location>
        <begin position="193"/>
        <end position="213"/>
    </location>
</feature>
<feature type="region of interest" description="Disordered" evidence="2">
    <location>
        <begin position="317"/>
        <end position="366"/>
    </location>
</feature>
<feature type="region of interest" description="Disordered" evidence="2">
    <location>
        <begin position="510"/>
        <end position="541"/>
    </location>
</feature>
<feature type="compositionally biased region" description="Low complexity" evidence="2">
    <location>
        <begin position="327"/>
        <end position="351"/>
    </location>
</feature>
<organism evidence="7">
    <name type="scientific">Neurospora crassa (strain ATCC 24698 / 74-OR23-1A / CBS 708.71 / DSM 1257 / FGSC 987)</name>
    <dbReference type="NCBI Taxonomy" id="367110"/>
    <lineage>
        <taxon>Eukaryota</taxon>
        <taxon>Fungi</taxon>
        <taxon>Dikarya</taxon>
        <taxon>Ascomycota</taxon>
        <taxon>Pezizomycotina</taxon>
        <taxon>Sordariomycetes</taxon>
        <taxon>Sordariomycetidae</taxon>
        <taxon>Sordariales</taxon>
        <taxon>Sordariaceae</taxon>
        <taxon>Neurospora</taxon>
    </lineage>
</organism>
<evidence type="ECO:0000255" key="1"/>
<evidence type="ECO:0000256" key="2">
    <source>
        <dbReference type="SAM" id="MobiDB-lite"/>
    </source>
</evidence>
<evidence type="ECO:0000269" key="3">
    <source>
    </source>
</evidence>
<evidence type="ECO:0000303" key="4">
    <source>
    </source>
</evidence>
<evidence type="ECO:0000305" key="5"/>
<evidence type="ECO:0000312" key="6">
    <source>
        <dbReference type="EMBL" id="EAA31472.1"/>
    </source>
</evidence>
<evidence type="ECO:0000312" key="7">
    <source>
        <dbReference type="Proteomes" id="UP000001805"/>
    </source>
</evidence>
<comment type="function">
    <text evidence="3">Exports stored molybdate from the vacuole into the cytosol, making it available for molybdate cofactor (Moco) biosynthesis (PubMed:36240974). Plays a role in molybdate homeostasis as high cytosolic levels of molybdate are toxic to cells (PubMed:36240974). Not required for molybdate import into cells (PubMed:36240974).</text>
</comment>
<comment type="subcellular location">
    <subcellularLocation>
        <location evidence="3">Vacuole membrane</location>
        <topology evidence="1">Multi-pass membrane protein</topology>
    </subcellularLocation>
</comment>
<comment type="disruption phenotype">
    <text evidence="3">Resistance to molybdate.</text>
</comment>
<comment type="similarity">
    <text evidence="5">Belongs to the SLC26A/SulP transporter (TC 2.A.53) family.</text>
</comment>
<gene>
    <name evidence="4" type="primary">mot-1</name>
    <name evidence="6" type="ORF">NCU01356</name>
</gene>
<dbReference type="EMBL" id="CM002240">
    <property type="protein sequence ID" value="EAA31472.1"/>
    <property type="molecule type" value="Genomic_DNA"/>
</dbReference>
<dbReference type="PIR" id="T48811">
    <property type="entry name" value="T48811"/>
</dbReference>
<dbReference type="RefSeq" id="XP_960708.1">
    <property type="nucleotide sequence ID" value="XM_955615.2"/>
</dbReference>
<dbReference type="PaxDb" id="5141-EFNCRP00000004066"/>
<dbReference type="EnsemblFungi" id="EAA31472">
    <property type="protein sequence ID" value="EAA31472"/>
    <property type="gene ID" value="NCU01356"/>
</dbReference>
<dbReference type="GeneID" id="3876855"/>
<dbReference type="KEGG" id="ncr:NCU01356"/>
<dbReference type="VEuPathDB" id="FungiDB:NCU01356"/>
<dbReference type="HOGENOM" id="CLU_032158_1_1_1"/>
<dbReference type="InParanoid" id="Q1K6N8"/>
<dbReference type="OMA" id="GSMPVCH"/>
<dbReference type="OrthoDB" id="5402974at2759"/>
<dbReference type="Proteomes" id="UP000001805">
    <property type="component" value="Chromosome 2, Linkage Group V"/>
</dbReference>
<dbReference type="GO" id="GO:0005774">
    <property type="term" value="C:vacuolar membrane"/>
    <property type="evidence" value="ECO:0000315"/>
    <property type="project" value="UniProtKB"/>
</dbReference>
<dbReference type="GO" id="GO:0015098">
    <property type="term" value="F:molybdate ion transmembrane transporter activity"/>
    <property type="evidence" value="ECO:0000315"/>
    <property type="project" value="UniProtKB"/>
</dbReference>
<dbReference type="GO" id="GO:0090414">
    <property type="term" value="P:molybdate ion export from vacuole"/>
    <property type="evidence" value="ECO:0000315"/>
    <property type="project" value="UniProtKB"/>
</dbReference>
<dbReference type="InterPro" id="IPR031563">
    <property type="entry name" value="MOT1/MOT2"/>
</dbReference>
<dbReference type="PANTHER" id="PTHR31970">
    <property type="match status" value="1"/>
</dbReference>
<dbReference type="PANTHER" id="PTHR31970:SF9">
    <property type="entry name" value="MOLYBDATE TRANSPORTER 2"/>
    <property type="match status" value="1"/>
</dbReference>
<dbReference type="Pfam" id="PF16983">
    <property type="entry name" value="MFS_MOT1"/>
    <property type="match status" value="2"/>
</dbReference>
<name>MOT1_NEUCR</name>